<dbReference type="EMBL" id="M16223">
    <property type="protein sequence ID" value="AAA70270.1"/>
    <property type="molecule type" value="Genomic_DNA"/>
</dbReference>
<dbReference type="PIR" id="JN0042">
    <property type="entry name" value="PWZM6M"/>
</dbReference>
<dbReference type="SMR" id="P07925"/>
<dbReference type="PaxDb" id="4577-GRMZM2G329636_P03"/>
<dbReference type="MaizeGDB" id="69201"/>
<dbReference type="eggNOG" id="KOG4665">
    <property type="taxonomic scope" value="Eukaryota"/>
</dbReference>
<dbReference type="GO" id="GO:0005743">
    <property type="term" value="C:mitochondrial inner membrane"/>
    <property type="evidence" value="ECO:0007669"/>
    <property type="project" value="UniProtKB-SubCell"/>
</dbReference>
<dbReference type="GO" id="GO:0045259">
    <property type="term" value="C:proton-transporting ATP synthase complex"/>
    <property type="evidence" value="ECO:0000318"/>
    <property type="project" value="GO_Central"/>
</dbReference>
<dbReference type="GO" id="GO:0015078">
    <property type="term" value="F:proton transmembrane transporter activity"/>
    <property type="evidence" value="ECO:0007669"/>
    <property type="project" value="InterPro"/>
</dbReference>
<dbReference type="GO" id="GO:0015986">
    <property type="term" value="P:proton motive force-driven ATP synthesis"/>
    <property type="evidence" value="ECO:0000318"/>
    <property type="project" value="GO_Central"/>
</dbReference>
<dbReference type="CDD" id="cd00310">
    <property type="entry name" value="ATP-synt_Fo_a_6"/>
    <property type="match status" value="1"/>
</dbReference>
<dbReference type="FunFam" id="1.20.120.220:FF:000003">
    <property type="entry name" value="ATP synthase subunit a"/>
    <property type="match status" value="1"/>
</dbReference>
<dbReference type="Gene3D" id="1.20.120.220">
    <property type="entry name" value="ATP synthase, F0 complex, subunit A"/>
    <property type="match status" value="1"/>
</dbReference>
<dbReference type="HAMAP" id="MF_01393">
    <property type="entry name" value="ATP_synth_a_bact"/>
    <property type="match status" value="1"/>
</dbReference>
<dbReference type="InterPro" id="IPR000568">
    <property type="entry name" value="ATP_synth_F0_asu"/>
</dbReference>
<dbReference type="InterPro" id="IPR023011">
    <property type="entry name" value="ATP_synth_F0_asu_AS"/>
</dbReference>
<dbReference type="InterPro" id="IPR045083">
    <property type="entry name" value="ATP_synth_F0_asu_bact/mt"/>
</dbReference>
<dbReference type="InterPro" id="IPR035908">
    <property type="entry name" value="F0_ATP_A_sf"/>
</dbReference>
<dbReference type="NCBIfam" id="TIGR01131">
    <property type="entry name" value="ATP_synt_6_or_A"/>
    <property type="match status" value="1"/>
</dbReference>
<dbReference type="NCBIfam" id="NF004482">
    <property type="entry name" value="PRK05815.2-4"/>
    <property type="match status" value="1"/>
</dbReference>
<dbReference type="PANTHER" id="PTHR11410">
    <property type="entry name" value="ATP SYNTHASE SUBUNIT A"/>
    <property type="match status" value="1"/>
</dbReference>
<dbReference type="PANTHER" id="PTHR11410:SF0">
    <property type="entry name" value="ATP SYNTHASE SUBUNIT A"/>
    <property type="match status" value="1"/>
</dbReference>
<dbReference type="Pfam" id="PF00119">
    <property type="entry name" value="ATP-synt_A"/>
    <property type="match status" value="1"/>
</dbReference>
<dbReference type="PRINTS" id="PR00123">
    <property type="entry name" value="ATPASEA"/>
</dbReference>
<dbReference type="SUPFAM" id="SSF81336">
    <property type="entry name" value="F1F0 ATP synthase subunit A"/>
    <property type="match status" value="1"/>
</dbReference>
<dbReference type="PROSITE" id="PS00449">
    <property type="entry name" value="ATPASE_A"/>
    <property type="match status" value="1"/>
</dbReference>
<keyword id="KW-0066">ATP synthesis</keyword>
<keyword id="KW-0138">CF(0)</keyword>
<keyword id="KW-0375">Hydrogen ion transport</keyword>
<keyword id="KW-0406">Ion transport</keyword>
<keyword id="KW-0472">Membrane</keyword>
<keyword id="KW-0496">Mitochondrion</keyword>
<keyword id="KW-0999">Mitochondrion inner membrane</keyword>
<keyword id="KW-0812">Transmembrane</keyword>
<keyword id="KW-1133">Transmembrane helix</keyword>
<keyword id="KW-0813">Transport</keyword>
<protein>
    <recommendedName>
        <fullName>ATP synthase subunit a</fullName>
    </recommendedName>
    <alternativeName>
        <fullName>F-ATPase protein 6</fullName>
    </alternativeName>
</protein>
<comment type="function">
    <text>Mitochondrial membrane ATP synthase (F(1)F(0) ATP synthase or Complex V) produces ATP from ADP in the presence of a proton gradient across the membrane which is generated by electron transport complexes of the respiratory chain. F-type ATPases consist of two structural domains, F(1) - containing the extramembraneous catalytic core and F(0) - containing the membrane proton channel, linked together by a central stalk and a peripheral stalk. During catalysis, ATP synthesis in the catalytic domain of F(1) is coupled via a rotary mechanism of the central stalk subunits to proton translocation. Key component of the proton channel; it may play a direct role in the translocation of protons across the membrane.</text>
</comment>
<comment type="subunit">
    <text>F-type ATPases have 2 components, CF(1) - the catalytic core - and CF(0) - the membrane proton channel. CF(1) has five subunits: alpha(3), beta(3), gamma(1), delta(1), epsilon(1). CF(0) has three main subunits: a, b and c.</text>
</comment>
<comment type="subcellular location">
    <subcellularLocation>
        <location>Mitochondrion inner membrane</location>
        <topology>Multi-pass membrane protein</topology>
    </subcellularLocation>
</comment>
<comment type="similarity">
    <text evidence="2">Belongs to the ATPase A chain family.</text>
</comment>
<proteinExistence type="inferred from homology"/>
<feature type="chain" id="PRO_0000082136" description="ATP synthase subunit a">
    <location>
        <begin position="1"/>
        <end position="291"/>
    </location>
</feature>
<feature type="transmembrane region" description="Helical" evidence="1">
    <location>
        <begin position="47"/>
        <end position="67"/>
    </location>
</feature>
<feature type="transmembrane region" description="Helical" evidence="1">
    <location>
        <begin position="140"/>
        <end position="160"/>
    </location>
</feature>
<feature type="transmembrane region" description="Helical" evidence="1">
    <location>
        <begin position="167"/>
        <end position="187"/>
    </location>
</feature>
<feature type="transmembrane region" description="Helical" evidence="1">
    <location>
        <begin position="207"/>
        <end position="227"/>
    </location>
</feature>
<feature type="transmembrane region" description="Helical" evidence="1">
    <location>
        <begin position="230"/>
        <end position="250"/>
    </location>
</feature>
<accession>P07925</accession>
<organism>
    <name type="scientific">Zea mays</name>
    <name type="common">Maize</name>
    <dbReference type="NCBI Taxonomy" id="4577"/>
    <lineage>
        <taxon>Eukaryota</taxon>
        <taxon>Viridiplantae</taxon>
        <taxon>Streptophyta</taxon>
        <taxon>Embryophyta</taxon>
        <taxon>Tracheophyta</taxon>
        <taxon>Spermatophyta</taxon>
        <taxon>Magnoliopsida</taxon>
        <taxon>Liliopsida</taxon>
        <taxon>Poales</taxon>
        <taxon>Poaceae</taxon>
        <taxon>PACMAD clade</taxon>
        <taxon>Panicoideae</taxon>
        <taxon>Andropogonodae</taxon>
        <taxon>Andropogoneae</taxon>
        <taxon>Tripsacinae</taxon>
        <taxon>Zea</taxon>
    </lineage>
</organism>
<name>ATP6_MAIZE</name>
<evidence type="ECO:0000255" key="1"/>
<evidence type="ECO:0000305" key="2"/>
<gene>
    <name type="primary">ATP6</name>
</gene>
<geneLocation type="mitochondrion"/>
<reference key="1">
    <citation type="journal article" date="1985" name="Plant Physiol.">
        <title>Nucleotide sequence of ATPase subunit 6 gene of maize mitochondria.</title>
        <authorList>
            <person name="Dewey R.E."/>
            <person name="Levings C.S. III"/>
            <person name="Timothy D.H."/>
        </authorList>
    </citation>
    <scope>NUCLEOTIDE SEQUENCE [GENOMIC DNA]</scope>
</reference>
<sequence>MERNGEIVNNGSIIIPGGGGPVTESPLDQFGIHPILDLNIGKYYVSFTNLSLSMLLTLGLVLLLVFVVTKKGGGKSVPNAFQSLVELIYDFVPNLVNEQIGGLSGNVKHKFFPCISVTFTFSLFRNPQGMIPFSFTVTSHFLITLALSFSIFIGITIVGFQRHGLHFFSFLLPAGVPLPLAPFLVLLELISHCFRALSSGIRLFANMMAGHSSVKILSGFAWTMLFLNNIFYFLGDLGPLFIVLALTGLELGVAISQAHVSTISICIYLNDATNLHQNESFHNCIKTRSQS</sequence>